<proteinExistence type="inferred from homology"/>
<dbReference type="EMBL" id="AF092923">
    <property type="protein sequence ID" value="AAP97217.1"/>
    <property type="molecule type" value="mRNA"/>
</dbReference>
<dbReference type="EMBL" id="BC093719">
    <property type="status" value="NOT_ANNOTATED_CDS"/>
    <property type="molecule type" value="mRNA"/>
</dbReference>
<dbReference type="EMBL" id="BC093721">
    <property type="status" value="NOT_ANNOTATED_CDS"/>
    <property type="molecule type" value="mRNA"/>
</dbReference>
<dbReference type="CCDS" id="CCDS54534.1"/>
<dbReference type="RefSeq" id="NP_001159349.1">
    <property type="nucleotide sequence ID" value="NM_001165877.1"/>
</dbReference>
<dbReference type="SMR" id="Q7Z4Y8"/>
<dbReference type="BioGRID" id="129369">
    <property type="interactions" value="4"/>
</dbReference>
<dbReference type="ComplexPortal" id="CPX-6151">
    <property type="entry name" value="Mitochondrial proton-transporting ATP synthase complex"/>
</dbReference>
<dbReference type="FunCoup" id="Q7Z4Y8">
    <property type="interactions" value="206"/>
</dbReference>
<dbReference type="IntAct" id="Q7Z4Y8">
    <property type="interactions" value="3"/>
</dbReference>
<dbReference type="STRING" id="9606.ENSP00000421076"/>
<dbReference type="GlyGen" id="Q7Z4Y8">
    <property type="glycosylation" value="1 site"/>
</dbReference>
<dbReference type="iPTMnet" id="Q7Z4Y8"/>
<dbReference type="PhosphoSitePlus" id="Q7Z4Y8"/>
<dbReference type="BioMuta" id="ATP5L2"/>
<dbReference type="DMDM" id="74762435"/>
<dbReference type="jPOST" id="Q7Z4Y8"/>
<dbReference type="MassIVE" id="Q7Z4Y8"/>
<dbReference type="PaxDb" id="9606-ENSP00000421076"/>
<dbReference type="PeptideAtlas" id="Q7Z4Y8"/>
<dbReference type="ProteomicsDB" id="69254"/>
<dbReference type="Antibodypedia" id="57396">
    <property type="antibodies" value="107 antibodies from 20 providers"/>
</dbReference>
<dbReference type="DNASU" id="267020"/>
<dbReference type="Ensembl" id="ENST00000505920.1">
    <property type="protein sequence ID" value="ENSP00000421076.1"/>
    <property type="gene ID" value="ENSG00000249222.1"/>
</dbReference>
<dbReference type="GeneID" id="267020"/>
<dbReference type="KEGG" id="hsa:267020"/>
<dbReference type="MANE-Select" id="ENST00000505920.1">
    <property type="protein sequence ID" value="ENSP00000421076.1"/>
    <property type="RefSeq nucleotide sequence ID" value="NM_001165877.1"/>
    <property type="RefSeq protein sequence ID" value="NP_001159349.1"/>
</dbReference>
<dbReference type="UCSC" id="uc003bda.1">
    <property type="organism name" value="human"/>
</dbReference>
<dbReference type="AGR" id="HGNC:13213"/>
<dbReference type="CTD" id="267020"/>
<dbReference type="GeneCards" id="ATP5MGL"/>
<dbReference type="HGNC" id="HGNC:13213">
    <property type="gene designation" value="ATP5MGL"/>
</dbReference>
<dbReference type="HPA" id="ENSG00000249222">
    <property type="expression patterns" value="Tissue enhanced (bone)"/>
</dbReference>
<dbReference type="MalaCards" id="ATP5MGL"/>
<dbReference type="neXtProt" id="NX_Q7Z4Y8"/>
<dbReference type="OpenTargets" id="ENSG00000249222"/>
<dbReference type="PharmGKB" id="PA134948694"/>
<dbReference type="VEuPathDB" id="HostDB:ENSG00000249222"/>
<dbReference type="eggNOG" id="KOG4103">
    <property type="taxonomic scope" value="Eukaryota"/>
</dbReference>
<dbReference type="GeneTree" id="ENSGT00390000009724"/>
<dbReference type="HOGENOM" id="CLU_152793_1_1_1"/>
<dbReference type="InParanoid" id="Q7Z4Y8"/>
<dbReference type="OMA" id="ATEMLMW"/>
<dbReference type="OrthoDB" id="437at2759"/>
<dbReference type="PAN-GO" id="Q7Z4Y8">
    <property type="GO annotations" value="2 GO annotations based on evolutionary models"/>
</dbReference>
<dbReference type="PhylomeDB" id="Q7Z4Y8"/>
<dbReference type="TreeFam" id="TF313978"/>
<dbReference type="PathwayCommons" id="Q7Z4Y8"/>
<dbReference type="BioGRID-ORCS" id="267020">
    <property type="hits" value="128 hits in 1078 CRISPR screens"/>
</dbReference>
<dbReference type="GenomeRNAi" id="267020"/>
<dbReference type="Pharos" id="Q7Z4Y8">
    <property type="development level" value="Tdark"/>
</dbReference>
<dbReference type="PRO" id="PR:Q7Z4Y8"/>
<dbReference type="Proteomes" id="UP000005640">
    <property type="component" value="Chromosome 22"/>
</dbReference>
<dbReference type="RNAct" id="Q7Z4Y8">
    <property type="molecule type" value="protein"/>
</dbReference>
<dbReference type="Bgee" id="ENSG00000249222">
    <property type="expression patterns" value="Expressed in male germ line stem cell (sensu Vertebrata) in testis and 22 other cell types or tissues"/>
</dbReference>
<dbReference type="GO" id="GO:0005743">
    <property type="term" value="C:mitochondrial inner membrane"/>
    <property type="evidence" value="ECO:0000303"/>
    <property type="project" value="ComplexPortal"/>
</dbReference>
<dbReference type="GO" id="GO:0005739">
    <property type="term" value="C:mitochondrion"/>
    <property type="evidence" value="ECO:0000314"/>
    <property type="project" value="HPA"/>
</dbReference>
<dbReference type="GO" id="GO:0045259">
    <property type="term" value="C:proton-transporting ATP synthase complex"/>
    <property type="evidence" value="ECO:0000303"/>
    <property type="project" value="ComplexPortal"/>
</dbReference>
<dbReference type="GO" id="GO:0015078">
    <property type="term" value="F:proton transmembrane transporter activity"/>
    <property type="evidence" value="ECO:0007669"/>
    <property type="project" value="InterPro"/>
</dbReference>
<dbReference type="GO" id="GO:0015986">
    <property type="term" value="P:proton motive force-driven ATP synthesis"/>
    <property type="evidence" value="ECO:0000318"/>
    <property type="project" value="GO_Central"/>
</dbReference>
<dbReference type="InterPro" id="IPR006808">
    <property type="entry name" value="ATP_synth_F0_gsu_mt"/>
</dbReference>
<dbReference type="InterPro" id="IPR016702">
    <property type="entry name" value="ATP_synth_su_G_mt_met"/>
</dbReference>
<dbReference type="PANTHER" id="PTHR12386">
    <property type="entry name" value="ATP SYNTHASE SUBUNIT"/>
    <property type="match status" value="1"/>
</dbReference>
<dbReference type="Pfam" id="PF04718">
    <property type="entry name" value="ATP-synt_G"/>
    <property type="match status" value="1"/>
</dbReference>
<dbReference type="PIRSF" id="PIRSF017835">
    <property type="entry name" value="ATP-synth_g_mitoch_animal"/>
    <property type="match status" value="1"/>
</dbReference>
<accession>Q7Z4Y8</accession>
<evidence type="ECO:0000250" key="1"/>
<evidence type="ECO:0000305" key="2"/>
<evidence type="ECO:0000312" key="3">
    <source>
        <dbReference type="HGNC" id="HGNC:13213"/>
    </source>
</evidence>
<sequence>MAPFVRNLVEKTPALVNAAVTYLKPRLAAFWYYTTVELVPPTPAEIPRAIQSLKKIVSSAQTGSFKQLTVKEALLNGLVATEVSTWFYVREITGKRGIIG</sequence>
<feature type="chain" id="PRO_0000225013" description="ATP synthase subunit g 2, mitochondrial">
    <location>
        <begin position="1"/>
        <end position="100"/>
    </location>
</feature>
<reference key="1">
    <citation type="submission" date="1998-09" db="EMBL/GenBank/DDBJ databases">
        <title>Cloning of a novel human cDNA homology to cattle heart F1Fo-ATP synthase complex Fo membrane domain g subunit mRNA.</title>
        <authorList>
            <person name="Lin W."/>
            <person name="Yu L."/>
            <person name="Zhou Y."/>
            <person name="Zhang M."/>
            <person name="Wang X.K."/>
            <person name="Zhao S.Y."/>
        </authorList>
    </citation>
    <scope>NUCLEOTIDE SEQUENCE [MRNA]</scope>
</reference>
<reference key="2">
    <citation type="journal article" date="2004" name="Genome Res.">
        <title>The status, quality, and expansion of the NIH full-length cDNA project: the Mammalian Gene Collection (MGC).</title>
        <authorList>
            <consortium name="The MGC Project Team"/>
        </authorList>
    </citation>
    <scope>NUCLEOTIDE SEQUENCE [LARGE SCALE MRNA]</scope>
    <source>
        <tissue>Liver</tissue>
    </source>
</reference>
<keyword id="KW-0066">ATP synthesis</keyword>
<keyword id="KW-0138">CF(0)</keyword>
<keyword id="KW-0375">Hydrogen ion transport</keyword>
<keyword id="KW-0406">Ion transport</keyword>
<keyword id="KW-0472">Membrane</keyword>
<keyword id="KW-0496">Mitochondrion</keyword>
<keyword id="KW-1185">Reference proteome</keyword>
<keyword id="KW-0813">Transport</keyword>
<protein>
    <recommendedName>
        <fullName evidence="2">ATP synthase subunit g 2, mitochondrial</fullName>
        <shortName>ATPase subunit g 2</shortName>
    </recommendedName>
    <alternativeName>
        <fullName evidence="2">ATP synthase membrane subunit g-like protein</fullName>
    </alternativeName>
</protein>
<gene>
    <name evidence="3" type="primary">ATP5MGL</name>
    <name type="synonym">ATP5K2</name>
    <name type="synonym">ATP5L2</name>
</gene>
<organism>
    <name type="scientific">Homo sapiens</name>
    <name type="common">Human</name>
    <dbReference type="NCBI Taxonomy" id="9606"/>
    <lineage>
        <taxon>Eukaryota</taxon>
        <taxon>Metazoa</taxon>
        <taxon>Chordata</taxon>
        <taxon>Craniata</taxon>
        <taxon>Vertebrata</taxon>
        <taxon>Euteleostomi</taxon>
        <taxon>Mammalia</taxon>
        <taxon>Eutheria</taxon>
        <taxon>Euarchontoglires</taxon>
        <taxon>Primates</taxon>
        <taxon>Haplorrhini</taxon>
        <taxon>Catarrhini</taxon>
        <taxon>Hominidae</taxon>
        <taxon>Homo</taxon>
    </lineage>
</organism>
<comment type="function">
    <text evidence="1">Mitochondrial membrane ATP synthase (F(1)F(0) ATP synthase or Complex V) produces ATP from ADP in the presence of a proton gradient across the membrane which is generated by electron transport complexes of the respiratory chain. F-type ATPases consist of two structural domains, F(1) - containing the extramembraneous catalytic core, and F(0) - containing the membrane proton channel, linked together by a central stalk and a peripheral stalk. During catalysis, ATP synthesis in the catalytic domain of F(1) is coupled via a rotary mechanism of the central stalk subunits to proton translocation. Part of the complex F(0) domain. Minor subunit located with subunit a in the membrane (By similarity).</text>
</comment>
<comment type="subunit">
    <text>F-type ATPases have 2 components, CF(1) - the catalytic core - and CF(0) - the membrane proton channel. CF(0) seems to have nine subunits: a, b, c, d, e, f, g, F6 and 8 (or A6L).</text>
</comment>
<comment type="subcellular location">
    <subcellularLocation>
        <location evidence="1">Mitochondrion membrane</location>
    </subcellularLocation>
</comment>
<comment type="similarity">
    <text evidence="2">Belongs to the ATPase g subunit family.</text>
</comment>
<name>AT5L2_HUMAN</name>